<organism>
    <name type="scientific">Alkaliphilus oremlandii (strain OhILAs)</name>
    <name type="common">Clostridium oremlandii (strain OhILAs)</name>
    <dbReference type="NCBI Taxonomy" id="350688"/>
    <lineage>
        <taxon>Bacteria</taxon>
        <taxon>Bacillati</taxon>
        <taxon>Bacillota</taxon>
        <taxon>Clostridia</taxon>
        <taxon>Peptostreptococcales</taxon>
        <taxon>Natronincolaceae</taxon>
        <taxon>Alkaliphilus</taxon>
    </lineage>
</organism>
<dbReference type="EC" id="3.1.1.96" evidence="1"/>
<dbReference type="EMBL" id="CP000853">
    <property type="protein sequence ID" value="ABW19253.1"/>
    <property type="molecule type" value="Genomic_DNA"/>
</dbReference>
<dbReference type="RefSeq" id="WP_012159565.1">
    <property type="nucleotide sequence ID" value="NC_009922.1"/>
</dbReference>
<dbReference type="SMR" id="A8MGN0"/>
<dbReference type="STRING" id="350688.Clos_1713"/>
<dbReference type="KEGG" id="aoe:Clos_1713"/>
<dbReference type="eggNOG" id="COG1490">
    <property type="taxonomic scope" value="Bacteria"/>
</dbReference>
<dbReference type="HOGENOM" id="CLU_076901_1_0_9"/>
<dbReference type="OrthoDB" id="9801395at2"/>
<dbReference type="Proteomes" id="UP000000269">
    <property type="component" value="Chromosome"/>
</dbReference>
<dbReference type="GO" id="GO:0005737">
    <property type="term" value="C:cytoplasm"/>
    <property type="evidence" value="ECO:0007669"/>
    <property type="project" value="UniProtKB-SubCell"/>
</dbReference>
<dbReference type="GO" id="GO:0051500">
    <property type="term" value="F:D-tyrosyl-tRNA(Tyr) deacylase activity"/>
    <property type="evidence" value="ECO:0007669"/>
    <property type="project" value="TreeGrafter"/>
</dbReference>
<dbReference type="GO" id="GO:0106026">
    <property type="term" value="F:Gly-tRNA(Ala) deacylase activity"/>
    <property type="evidence" value="ECO:0007669"/>
    <property type="project" value="UniProtKB-UniRule"/>
</dbReference>
<dbReference type="GO" id="GO:0043908">
    <property type="term" value="F:Ser(Gly)-tRNA(Ala) hydrolase activity"/>
    <property type="evidence" value="ECO:0007669"/>
    <property type="project" value="UniProtKB-UniRule"/>
</dbReference>
<dbReference type="GO" id="GO:0000049">
    <property type="term" value="F:tRNA binding"/>
    <property type="evidence" value="ECO:0007669"/>
    <property type="project" value="UniProtKB-UniRule"/>
</dbReference>
<dbReference type="GO" id="GO:0019478">
    <property type="term" value="P:D-amino acid catabolic process"/>
    <property type="evidence" value="ECO:0007669"/>
    <property type="project" value="UniProtKB-UniRule"/>
</dbReference>
<dbReference type="CDD" id="cd00563">
    <property type="entry name" value="Dtyr_deacylase"/>
    <property type="match status" value="1"/>
</dbReference>
<dbReference type="FunFam" id="3.50.80.10:FF:000001">
    <property type="entry name" value="D-aminoacyl-tRNA deacylase"/>
    <property type="match status" value="1"/>
</dbReference>
<dbReference type="Gene3D" id="3.50.80.10">
    <property type="entry name" value="D-tyrosyl-tRNA(Tyr) deacylase"/>
    <property type="match status" value="1"/>
</dbReference>
<dbReference type="HAMAP" id="MF_00518">
    <property type="entry name" value="Deacylase_Dtd"/>
    <property type="match status" value="1"/>
</dbReference>
<dbReference type="InterPro" id="IPR003732">
    <property type="entry name" value="Daa-tRNA_deacyls_DTD"/>
</dbReference>
<dbReference type="InterPro" id="IPR023509">
    <property type="entry name" value="DTD-like_sf"/>
</dbReference>
<dbReference type="NCBIfam" id="TIGR00256">
    <property type="entry name" value="D-aminoacyl-tRNA deacylase"/>
    <property type="match status" value="1"/>
</dbReference>
<dbReference type="PANTHER" id="PTHR10472:SF5">
    <property type="entry name" value="D-AMINOACYL-TRNA DEACYLASE 1"/>
    <property type="match status" value="1"/>
</dbReference>
<dbReference type="PANTHER" id="PTHR10472">
    <property type="entry name" value="D-TYROSYL-TRNA TYR DEACYLASE"/>
    <property type="match status" value="1"/>
</dbReference>
<dbReference type="Pfam" id="PF02580">
    <property type="entry name" value="Tyr_Deacylase"/>
    <property type="match status" value="1"/>
</dbReference>
<dbReference type="SUPFAM" id="SSF69500">
    <property type="entry name" value="DTD-like"/>
    <property type="match status" value="1"/>
</dbReference>
<sequence length="149" mass="16707">MRAVVQRISEGKVVVDDAVTGAIKKGLLVFLGVTKEDTMEDVQYMAEKIVNLRIFEDQEEKMNLSVKDVGGKILAVSQFTLLGDCRKGRRPSFTEAARPETADKLYEAFIEQCEKLDIKVEKGVFQAHMMVHLVNDGPVTMLIDSKKVF</sequence>
<accession>A8MGN0</accession>
<comment type="function">
    <text evidence="1">An aminoacyl-tRNA editing enzyme that deacylates mischarged D-aminoacyl-tRNAs. Also deacylates mischarged glycyl-tRNA(Ala), protecting cells against glycine mischarging by AlaRS. Acts via tRNA-based rather than protein-based catalysis; rejects L-amino acids rather than detecting D-amino acids in the active site. By recycling D-aminoacyl-tRNA to D-amino acids and free tRNA molecules, this enzyme counteracts the toxicity associated with the formation of D-aminoacyl-tRNA entities in vivo and helps enforce protein L-homochirality.</text>
</comment>
<comment type="catalytic activity">
    <reaction evidence="1">
        <text>glycyl-tRNA(Ala) + H2O = tRNA(Ala) + glycine + H(+)</text>
        <dbReference type="Rhea" id="RHEA:53744"/>
        <dbReference type="Rhea" id="RHEA-COMP:9657"/>
        <dbReference type="Rhea" id="RHEA-COMP:13640"/>
        <dbReference type="ChEBI" id="CHEBI:15377"/>
        <dbReference type="ChEBI" id="CHEBI:15378"/>
        <dbReference type="ChEBI" id="CHEBI:57305"/>
        <dbReference type="ChEBI" id="CHEBI:78442"/>
        <dbReference type="ChEBI" id="CHEBI:78522"/>
        <dbReference type="EC" id="3.1.1.96"/>
    </reaction>
</comment>
<comment type="catalytic activity">
    <reaction evidence="1">
        <text>a D-aminoacyl-tRNA + H2O = a tRNA + a D-alpha-amino acid + H(+)</text>
        <dbReference type="Rhea" id="RHEA:13953"/>
        <dbReference type="Rhea" id="RHEA-COMP:10123"/>
        <dbReference type="Rhea" id="RHEA-COMP:10124"/>
        <dbReference type="ChEBI" id="CHEBI:15377"/>
        <dbReference type="ChEBI" id="CHEBI:15378"/>
        <dbReference type="ChEBI" id="CHEBI:59871"/>
        <dbReference type="ChEBI" id="CHEBI:78442"/>
        <dbReference type="ChEBI" id="CHEBI:79333"/>
        <dbReference type="EC" id="3.1.1.96"/>
    </reaction>
</comment>
<comment type="subunit">
    <text evidence="1">Homodimer.</text>
</comment>
<comment type="subcellular location">
    <subcellularLocation>
        <location evidence="1">Cytoplasm</location>
    </subcellularLocation>
</comment>
<comment type="domain">
    <text evidence="1">A Gly-cisPro motif from one monomer fits into the active site of the other monomer to allow specific chiral rejection of L-amino acids.</text>
</comment>
<comment type="similarity">
    <text evidence="1">Belongs to the DTD family.</text>
</comment>
<gene>
    <name evidence="1" type="primary">dtd</name>
    <name type="ordered locus">Clos_1713</name>
</gene>
<name>DTD_ALKOO</name>
<proteinExistence type="inferred from homology"/>
<evidence type="ECO:0000255" key="1">
    <source>
        <dbReference type="HAMAP-Rule" id="MF_00518"/>
    </source>
</evidence>
<reference key="1">
    <citation type="submission" date="2007-10" db="EMBL/GenBank/DDBJ databases">
        <title>Complete genome of Alkaliphilus oremlandii OhILAs.</title>
        <authorList>
            <person name="Copeland A."/>
            <person name="Lucas S."/>
            <person name="Lapidus A."/>
            <person name="Barry K."/>
            <person name="Detter J.C."/>
            <person name="Glavina del Rio T."/>
            <person name="Hammon N."/>
            <person name="Israni S."/>
            <person name="Dalin E."/>
            <person name="Tice H."/>
            <person name="Pitluck S."/>
            <person name="Chain P."/>
            <person name="Malfatti S."/>
            <person name="Shin M."/>
            <person name="Vergez L."/>
            <person name="Schmutz J."/>
            <person name="Larimer F."/>
            <person name="Land M."/>
            <person name="Hauser L."/>
            <person name="Kyrpides N."/>
            <person name="Mikhailova N."/>
            <person name="Stolz J.F."/>
            <person name="Dawson A."/>
            <person name="Fisher E."/>
            <person name="Crable B."/>
            <person name="Perera E."/>
            <person name="Lisak J."/>
            <person name="Ranganathan M."/>
            <person name="Basu P."/>
            <person name="Richardson P."/>
        </authorList>
    </citation>
    <scope>NUCLEOTIDE SEQUENCE [LARGE SCALE GENOMIC DNA]</scope>
    <source>
        <strain>OhILAs</strain>
    </source>
</reference>
<protein>
    <recommendedName>
        <fullName evidence="1">D-aminoacyl-tRNA deacylase</fullName>
        <shortName evidence="1">DTD</shortName>
        <ecNumber evidence="1">3.1.1.96</ecNumber>
    </recommendedName>
    <alternativeName>
        <fullName evidence="1">Gly-tRNA(Ala) deacylase</fullName>
    </alternativeName>
</protein>
<feature type="chain" id="PRO_1000060904" description="D-aminoacyl-tRNA deacylase">
    <location>
        <begin position="1"/>
        <end position="149"/>
    </location>
</feature>
<feature type="short sequence motif" description="Gly-cisPro motif, important for rejection of L-amino acids" evidence="1">
    <location>
        <begin position="137"/>
        <end position="138"/>
    </location>
</feature>
<keyword id="KW-0963">Cytoplasm</keyword>
<keyword id="KW-0378">Hydrolase</keyword>
<keyword id="KW-1185">Reference proteome</keyword>
<keyword id="KW-0694">RNA-binding</keyword>
<keyword id="KW-0820">tRNA-binding</keyword>